<proteinExistence type="inferred from homology"/>
<feature type="chain" id="PRO_0000181641" description="tRNA(Ile)-lysidine synthase">
    <location>
        <begin position="1"/>
        <end position="476"/>
    </location>
</feature>
<feature type="binding site" evidence="1">
    <location>
        <begin position="30"/>
        <end position="35"/>
    </location>
    <ligand>
        <name>ATP</name>
        <dbReference type="ChEBI" id="CHEBI:30616"/>
    </ligand>
</feature>
<protein>
    <recommendedName>
        <fullName evidence="1">tRNA(Ile)-lysidine synthase</fullName>
        <ecNumber evidence="1">6.3.4.19</ecNumber>
    </recommendedName>
    <alternativeName>
        <fullName evidence="1">tRNA(Ile)-2-lysyl-cytidine synthase</fullName>
    </alternativeName>
    <alternativeName>
        <fullName evidence="1">tRNA(Ile)-lysidine synthetase</fullName>
    </alternativeName>
</protein>
<dbReference type="EC" id="6.3.4.19" evidence="1"/>
<dbReference type="EMBL" id="AE016879">
    <property type="protein sequence ID" value="AAP24117.1"/>
    <property type="molecule type" value="Genomic_DNA"/>
</dbReference>
<dbReference type="EMBL" id="AE017334">
    <property type="protein sequence ID" value="AAT29140.1"/>
    <property type="molecule type" value="Genomic_DNA"/>
</dbReference>
<dbReference type="EMBL" id="AE017225">
    <property type="protein sequence ID" value="AAT52400.1"/>
    <property type="molecule type" value="Genomic_DNA"/>
</dbReference>
<dbReference type="RefSeq" id="NP_842631.1">
    <property type="nucleotide sequence ID" value="NC_003997.3"/>
</dbReference>
<dbReference type="RefSeq" id="WP_000655474.1">
    <property type="nucleotide sequence ID" value="NZ_WXXJ01000031.1"/>
</dbReference>
<dbReference type="RefSeq" id="YP_026349.1">
    <property type="nucleotide sequence ID" value="NC_005945.1"/>
</dbReference>
<dbReference type="SMR" id="Q81VX7"/>
<dbReference type="STRING" id="261594.GBAA_0062"/>
<dbReference type="DNASU" id="1086418"/>
<dbReference type="GeneID" id="45020105"/>
<dbReference type="KEGG" id="ban:BA_0062"/>
<dbReference type="KEGG" id="bar:GBAA_0062"/>
<dbReference type="KEGG" id="bat:BAS0062"/>
<dbReference type="PATRIC" id="fig|198094.11.peg.59"/>
<dbReference type="eggNOG" id="COG0037">
    <property type="taxonomic scope" value="Bacteria"/>
</dbReference>
<dbReference type="HOGENOM" id="CLU_018869_0_1_9"/>
<dbReference type="OMA" id="HLNHMLR"/>
<dbReference type="OrthoDB" id="9807403at2"/>
<dbReference type="Proteomes" id="UP000000427">
    <property type="component" value="Chromosome"/>
</dbReference>
<dbReference type="Proteomes" id="UP000000594">
    <property type="component" value="Chromosome"/>
</dbReference>
<dbReference type="GO" id="GO:0005737">
    <property type="term" value="C:cytoplasm"/>
    <property type="evidence" value="ECO:0007669"/>
    <property type="project" value="UniProtKB-SubCell"/>
</dbReference>
<dbReference type="GO" id="GO:0005524">
    <property type="term" value="F:ATP binding"/>
    <property type="evidence" value="ECO:0007669"/>
    <property type="project" value="UniProtKB-UniRule"/>
</dbReference>
<dbReference type="GO" id="GO:0032267">
    <property type="term" value="F:tRNA(Ile)-lysidine synthase activity"/>
    <property type="evidence" value="ECO:0007669"/>
    <property type="project" value="UniProtKB-EC"/>
</dbReference>
<dbReference type="GO" id="GO:0006400">
    <property type="term" value="P:tRNA modification"/>
    <property type="evidence" value="ECO:0007669"/>
    <property type="project" value="UniProtKB-UniRule"/>
</dbReference>
<dbReference type="CDD" id="cd01992">
    <property type="entry name" value="TilS_N"/>
    <property type="match status" value="1"/>
</dbReference>
<dbReference type="Gene3D" id="3.30.465.60">
    <property type="match status" value="1"/>
</dbReference>
<dbReference type="Gene3D" id="3.40.50.620">
    <property type="entry name" value="HUPs"/>
    <property type="match status" value="1"/>
</dbReference>
<dbReference type="HAMAP" id="MF_01161">
    <property type="entry name" value="tRNA_Ile_lys_synt"/>
    <property type="match status" value="1"/>
</dbReference>
<dbReference type="InterPro" id="IPR012796">
    <property type="entry name" value="Lysidine-tRNA-synth_C"/>
</dbReference>
<dbReference type="InterPro" id="IPR014729">
    <property type="entry name" value="Rossmann-like_a/b/a_fold"/>
</dbReference>
<dbReference type="InterPro" id="IPR011063">
    <property type="entry name" value="TilS/TtcA_N"/>
</dbReference>
<dbReference type="InterPro" id="IPR012094">
    <property type="entry name" value="tRNA_Ile_lys_synt"/>
</dbReference>
<dbReference type="InterPro" id="IPR012795">
    <property type="entry name" value="tRNA_Ile_lys_synt_N"/>
</dbReference>
<dbReference type="InterPro" id="IPR015262">
    <property type="entry name" value="tRNA_Ile_lys_synt_subst-bd"/>
</dbReference>
<dbReference type="NCBIfam" id="TIGR02433">
    <property type="entry name" value="lysidine_TilS_C"/>
    <property type="match status" value="1"/>
</dbReference>
<dbReference type="NCBIfam" id="TIGR02432">
    <property type="entry name" value="lysidine_TilS_N"/>
    <property type="match status" value="1"/>
</dbReference>
<dbReference type="PANTHER" id="PTHR43033">
    <property type="entry name" value="TRNA(ILE)-LYSIDINE SYNTHASE-RELATED"/>
    <property type="match status" value="1"/>
</dbReference>
<dbReference type="PANTHER" id="PTHR43033:SF1">
    <property type="entry name" value="TRNA(ILE)-LYSIDINE SYNTHASE-RELATED"/>
    <property type="match status" value="1"/>
</dbReference>
<dbReference type="Pfam" id="PF01171">
    <property type="entry name" value="ATP_bind_3"/>
    <property type="match status" value="1"/>
</dbReference>
<dbReference type="Pfam" id="PF09179">
    <property type="entry name" value="TilS"/>
    <property type="match status" value="1"/>
</dbReference>
<dbReference type="Pfam" id="PF11734">
    <property type="entry name" value="TilS_C"/>
    <property type="match status" value="1"/>
</dbReference>
<dbReference type="SMART" id="SM00977">
    <property type="entry name" value="TilS_C"/>
    <property type="match status" value="1"/>
</dbReference>
<dbReference type="SUPFAM" id="SSF52402">
    <property type="entry name" value="Adenine nucleotide alpha hydrolases-like"/>
    <property type="match status" value="1"/>
</dbReference>
<dbReference type="SUPFAM" id="SSF82829">
    <property type="entry name" value="MesJ substrate recognition domain-like"/>
    <property type="match status" value="1"/>
</dbReference>
<dbReference type="SUPFAM" id="SSF56037">
    <property type="entry name" value="PheT/TilS domain"/>
    <property type="match status" value="1"/>
</dbReference>
<accession>Q81VX7</accession>
<accession>Q6I4Y1</accession>
<accession>Q6KYM5</accession>
<reference key="1">
    <citation type="journal article" date="2003" name="Nature">
        <title>The genome sequence of Bacillus anthracis Ames and comparison to closely related bacteria.</title>
        <authorList>
            <person name="Read T.D."/>
            <person name="Peterson S.N."/>
            <person name="Tourasse N.J."/>
            <person name="Baillie L.W."/>
            <person name="Paulsen I.T."/>
            <person name="Nelson K.E."/>
            <person name="Tettelin H."/>
            <person name="Fouts D.E."/>
            <person name="Eisen J.A."/>
            <person name="Gill S.R."/>
            <person name="Holtzapple E.K."/>
            <person name="Okstad O.A."/>
            <person name="Helgason E."/>
            <person name="Rilstone J."/>
            <person name="Wu M."/>
            <person name="Kolonay J.F."/>
            <person name="Beanan M.J."/>
            <person name="Dodson R.J."/>
            <person name="Brinkac L.M."/>
            <person name="Gwinn M.L."/>
            <person name="DeBoy R.T."/>
            <person name="Madpu R."/>
            <person name="Daugherty S.C."/>
            <person name="Durkin A.S."/>
            <person name="Haft D.H."/>
            <person name="Nelson W.C."/>
            <person name="Peterson J.D."/>
            <person name="Pop M."/>
            <person name="Khouri H.M."/>
            <person name="Radune D."/>
            <person name="Benton J.L."/>
            <person name="Mahamoud Y."/>
            <person name="Jiang L."/>
            <person name="Hance I.R."/>
            <person name="Weidman J.F."/>
            <person name="Berry K.J."/>
            <person name="Plaut R.D."/>
            <person name="Wolf A.M."/>
            <person name="Watkins K.L."/>
            <person name="Nierman W.C."/>
            <person name="Hazen A."/>
            <person name="Cline R.T."/>
            <person name="Redmond C."/>
            <person name="Thwaite J.E."/>
            <person name="White O."/>
            <person name="Salzberg S.L."/>
            <person name="Thomason B."/>
            <person name="Friedlander A.M."/>
            <person name="Koehler T.M."/>
            <person name="Hanna P.C."/>
            <person name="Kolstoe A.-B."/>
            <person name="Fraser C.M."/>
        </authorList>
    </citation>
    <scope>NUCLEOTIDE SEQUENCE [LARGE SCALE GENOMIC DNA]</scope>
    <source>
        <strain>Ames / isolate Porton</strain>
    </source>
</reference>
<reference key="2">
    <citation type="journal article" date="2009" name="J. Bacteriol.">
        <title>The complete genome sequence of Bacillus anthracis Ames 'Ancestor'.</title>
        <authorList>
            <person name="Ravel J."/>
            <person name="Jiang L."/>
            <person name="Stanley S.T."/>
            <person name="Wilson M.R."/>
            <person name="Decker R.S."/>
            <person name="Read T.D."/>
            <person name="Worsham P."/>
            <person name="Keim P.S."/>
            <person name="Salzberg S.L."/>
            <person name="Fraser-Liggett C.M."/>
            <person name="Rasko D.A."/>
        </authorList>
    </citation>
    <scope>NUCLEOTIDE SEQUENCE [LARGE SCALE GENOMIC DNA]</scope>
    <source>
        <strain>Ames ancestor</strain>
    </source>
</reference>
<reference key="3">
    <citation type="submission" date="2004-01" db="EMBL/GenBank/DDBJ databases">
        <title>Complete genome sequence of Bacillus anthracis Sterne.</title>
        <authorList>
            <person name="Brettin T.S."/>
            <person name="Bruce D."/>
            <person name="Challacombe J.F."/>
            <person name="Gilna P."/>
            <person name="Han C."/>
            <person name="Hill K."/>
            <person name="Hitchcock P."/>
            <person name="Jackson P."/>
            <person name="Keim P."/>
            <person name="Longmire J."/>
            <person name="Lucas S."/>
            <person name="Okinaka R."/>
            <person name="Richardson P."/>
            <person name="Rubin E."/>
            <person name="Tice H."/>
        </authorList>
    </citation>
    <scope>NUCLEOTIDE SEQUENCE [LARGE SCALE GENOMIC DNA]</scope>
    <source>
        <strain>Sterne</strain>
    </source>
</reference>
<gene>
    <name evidence="1" type="primary">tilS</name>
    <name type="ordered locus">BA_0062</name>
    <name type="ordered locus">GBAA_0062</name>
    <name type="ordered locus">BAS0062</name>
</gene>
<evidence type="ECO:0000255" key="1">
    <source>
        <dbReference type="HAMAP-Rule" id="MF_01161"/>
    </source>
</evidence>
<organism>
    <name type="scientific">Bacillus anthracis</name>
    <dbReference type="NCBI Taxonomy" id="1392"/>
    <lineage>
        <taxon>Bacteria</taxon>
        <taxon>Bacillati</taxon>
        <taxon>Bacillota</taxon>
        <taxon>Bacilli</taxon>
        <taxon>Bacillales</taxon>
        <taxon>Bacillaceae</taxon>
        <taxon>Bacillus</taxon>
        <taxon>Bacillus cereus group</taxon>
    </lineage>
</organism>
<name>TILS_BACAN</name>
<keyword id="KW-0067">ATP-binding</keyword>
<keyword id="KW-0963">Cytoplasm</keyword>
<keyword id="KW-0436">Ligase</keyword>
<keyword id="KW-0547">Nucleotide-binding</keyword>
<keyword id="KW-1185">Reference proteome</keyword>
<keyword id="KW-0819">tRNA processing</keyword>
<sequence length="476" mass="54891">MKDTFVEKVDDFVRQHDVLKERSTIVVGVSGGPDSLALLYYLLEKRAAKQFEIVVAHVDHMFRGDESHEDLQFVQDLCKGLGVICETIRINVSQYQKQYGMNAQVAARECRYAFLERIMKKYDARYVALGHHGDDQVETILMRLVRGSTPKGYAGIAVKRPFHNGYLIRPLLGVTKEEIVNYCNELKIIPRIDPSNKKEVYTRNRLRKYVLPHLKEENPQVHEKFQKFSMQMQEDEAYLQELAFEKMNKVITKKSDKQISLSIPTFESMSMPLQRRGIQLILNYLYEYKIPSSLSSIHIDKVIEFFKRTQPSGSLDFPGDLKIVRAYEECSFGFKQEIVSPFLQDLSVPGTITLSNGDKLVTEVSEDIPSDMNETVFVAKYNDISYPIRIRSRENGDRMSIQGMNGTKKIKAIFIEAKVPREKREEWPVVCDASGNIIWLPLLKRSAFAISKETAKKDKYMIIHYKSKESSGRIMK</sequence>
<comment type="function">
    <text evidence="1">Ligates lysine onto the cytidine present at position 34 of the AUA codon-specific tRNA(Ile) that contains the anticodon CAU, in an ATP-dependent manner. Cytidine is converted to lysidine, thus changing the amino acid specificity of the tRNA from methionine to isoleucine.</text>
</comment>
<comment type="catalytic activity">
    <reaction evidence="1">
        <text>cytidine(34) in tRNA(Ile2) + L-lysine + ATP = lysidine(34) in tRNA(Ile2) + AMP + diphosphate + H(+)</text>
        <dbReference type="Rhea" id="RHEA:43744"/>
        <dbReference type="Rhea" id="RHEA-COMP:10625"/>
        <dbReference type="Rhea" id="RHEA-COMP:10670"/>
        <dbReference type="ChEBI" id="CHEBI:15378"/>
        <dbReference type="ChEBI" id="CHEBI:30616"/>
        <dbReference type="ChEBI" id="CHEBI:32551"/>
        <dbReference type="ChEBI" id="CHEBI:33019"/>
        <dbReference type="ChEBI" id="CHEBI:82748"/>
        <dbReference type="ChEBI" id="CHEBI:83665"/>
        <dbReference type="ChEBI" id="CHEBI:456215"/>
        <dbReference type="EC" id="6.3.4.19"/>
    </reaction>
</comment>
<comment type="subcellular location">
    <subcellularLocation>
        <location evidence="1">Cytoplasm</location>
    </subcellularLocation>
</comment>
<comment type="domain">
    <text>The N-terminal region contains the highly conserved SGGXDS motif, predicted to be a P-loop motif involved in ATP binding.</text>
</comment>
<comment type="similarity">
    <text evidence="1">Belongs to the tRNA(Ile)-lysidine synthase family.</text>
</comment>